<dbReference type="EMBL" id="CP000109">
    <property type="protein sequence ID" value="ABB42757.1"/>
    <property type="molecule type" value="Genomic_DNA"/>
</dbReference>
<dbReference type="SMR" id="Q31DL6"/>
<dbReference type="STRING" id="317025.Tcr_2169"/>
<dbReference type="KEGG" id="tcx:Tcr_2169"/>
<dbReference type="eggNOG" id="COG0711">
    <property type="taxonomic scope" value="Bacteria"/>
</dbReference>
<dbReference type="HOGENOM" id="CLU_079215_4_5_6"/>
<dbReference type="OrthoDB" id="9788020at2"/>
<dbReference type="GO" id="GO:0005886">
    <property type="term" value="C:plasma membrane"/>
    <property type="evidence" value="ECO:0007669"/>
    <property type="project" value="UniProtKB-SubCell"/>
</dbReference>
<dbReference type="GO" id="GO:0045259">
    <property type="term" value="C:proton-transporting ATP synthase complex"/>
    <property type="evidence" value="ECO:0007669"/>
    <property type="project" value="UniProtKB-KW"/>
</dbReference>
<dbReference type="GO" id="GO:0046933">
    <property type="term" value="F:proton-transporting ATP synthase activity, rotational mechanism"/>
    <property type="evidence" value="ECO:0007669"/>
    <property type="project" value="UniProtKB-UniRule"/>
</dbReference>
<dbReference type="GO" id="GO:0046961">
    <property type="term" value="F:proton-transporting ATPase activity, rotational mechanism"/>
    <property type="evidence" value="ECO:0007669"/>
    <property type="project" value="TreeGrafter"/>
</dbReference>
<dbReference type="CDD" id="cd06503">
    <property type="entry name" value="ATP-synt_Fo_b"/>
    <property type="match status" value="1"/>
</dbReference>
<dbReference type="Gene3D" id="6.10.250.1580">
    <property type="match status" value="1"/>
</dbReference>
<dbReference type="HAMAP" id="MF_01398">
    <property type="entry name" value="ATP_synth_b_bprime"/>
    <property type="match status" value="1"/>
</dbReference>
<dbReference type="InterPro" id="IPR028987">
    <property type="entry name" value="ATP_synth_B-like_membr_sf"/>
</dbReference>
<dbReference type="InterPro" id="IPR002146">
    <property type="entry name" value="ATP_synth_b/b'su_bac/chlpt"/>
</dbReference>
<dbReference type="InterPro" id="IPR005864">
    <property type="entry name" value="ATP_synth_F0_bsu_bac"/>
</dbReference>
<dbReference type="InterPro" id="IPR050059">
    <property type="entry name" value="ATP_synthase_B_chain"/>
</dbReference>
<dbReference type="NCBIfam" id="TIGR01144">
    <property type="entry name" value="ATP_synt_b"/>
    <property type="match status" value="1"/>
</dbReference>
<dbReference type="NCBIfam" id="NF004411">
    <property type="entry name" value="PRK05759.1-2"/>
    <property type="match status" value="1"/>
</dbReference>
<dbReference type="PANTHER" id="PTHR33445:SF1">
    <property type="entry name" value="ATP SYNTHASE SUBUNIT B"/>
    <property type="match status" value="1"/>
</dbReference>
<dbReference type="PANTHER" id="PTHR33445">
    <property type="entry name" value="ATP SYNTHASE SUBUNIT B', CHLOROPLASTIC"/>
    <property type="match status" value="1"/>
</dbReference>
<dbReference type="Pfam" id="PF00430">
    <property type="entry name" value="ATP-synt_B"/>
    <property type="match status" value="1"/>
</dbReference>
<dbReference type="SUPFAM" id="SSF81573">
    <property type="entry name" value="F1F0 ATP synthase subunit B, membrane domain"/>
    <property type="match status" value="1"/>
</dbReference>
<evidence type="ECO:0000255" key="1">
    <source>
        <dbReference type="HAMAP-Rule" id="MF_01398"/>
    </source>
</evidence>
<gene>
    <name evidence="1" type="primary">atpF</name>
    <name type="ordered locus">Tcr_2169</name>
</gene>
<keyword id="KW-0066">ATP synthesis</keyword>
<keyword id="KW-0997">Cell inner membrane</keyword>
<keyword id="KW-1003">Cell membrane</keyword>
<keyword id="KW-0138">CF(0)</keyword>
<keyword id="KW-0375">Hydrogen ion transport</keyword>
<keyword id="KW-0406">Ion transport</keyword>
<keyword id="KW-0472">Membrane</keyword>
<keyword id="KW-0812">Transmembrane</keyword>
<keyword id="KW-1133">Transmembrane helix</keyword>
<keyword id="KW-0813">Transport</keyword>
<feature type="chain" id="PRO_0000368847" description="ATP synthase subunit b">
    <location>
        <begin position="1"/>
        <end position="156"/>
    </location>
</feature>
<feature type="transmembrane region" description="Helical" evidence="1">
    <location>
        <begin position="1"/>
        <end position="21"/>
    </location>
</feature>
<proteinExistence type="inferred from homology"/>
<name>ATPF_HYDCU</name>
<accession>Q31DL6</accession>
<reference key="1">
    <citation type="journal article" date="2006" name="PLoS Biol.">
        <title>The genome of deep-sea vent chemolithoautotroph Thiomicrospira crunogena XCL-2.</title>
        <authorList>
            <person name="Scott K.M."/>
            <person name="Sievert S.M."/>
            <person name="Abril F.N."/>
            <person name="Ball L.A."/>
            <person name="Barrett C.J."/>
            <person name="Blake R.A."/>
            <person name="Boller A.J."/>
            <person name="Chain P.S.G."/>
            <person name="Clark J.A."/>
            <person name="Davis C.R."/>
            <person name="Detter C."/>
            <person name="Do K.F."/>
            <person name="Dobrinski K.P."/>
            <person name="Faza B.I."/>
            <person name="Fitzpatrick K.A."/>
            <person name="Freyermuth S.K."/>
            <person name="Harmer T.L."/>
            <person name="Hauser L.J."/>
            <person name="Huegler M."/>
            <person name="Kerfeld C.A."/>
            <person name="Klotz M.G."/>
            <person name="Kong W.W."/>
            <person name="Land M."/>
            <person name="Lapidus A."/>
            <person name="Larimer F.W."/>
            <person name="Longo D.L."/>
            <person name="Lucas S."/>
            <person name="Malfatti S.A."/>
            <person name="Massey S.E."/>
            <person name="Martin D.D."/>
            <person name="McCuddin Z."/>
            <person name="Meyer F."/>
            <person name="Moore J.L."/>
            <person name="Ocampo L.H. Jr."/>
            <person name="Paul J.H."/>
            <person name="Paulsen I.T."/>
            <person name="Reep D.K."/>
            <person name="Ren Q."/>
            <person name="Ross R.L."/>
            <person name="Sato P.Y."/>
            <person name="Thomas P."/>
            <person name="Tinkham L.E."/>
            <person name="Zeruth G.T."/>
        </authorList>
    </citation>
    <scope>NUCLEOTIDE SEQUENCE [LARGE SCALE GENOMIC DNA]</scope>
    <source>
        <strain>DSM 25203 / XCL-2</strain>
    </source>
</reference>
<organism>
    <name type="scientific">Hydrogenovibrio crunogenus (strain DSM 25203 / XCL-2)</name>
    <name type="common">Thiomicrospira crunogena</name>
    <dbReference type="NCBI Taxonomy" id="317025"/>
    <lineage>
        <taxon>Bacteria</taxon>
        <taxon>Pseudomonadati</taxon>
        <taxon>Pseudomonadota</taxon>
        <taxon>Gammaproteobacteria</taxon>
        <taxon>Thiotrichales</taxon>
        <taxon>Piscirickettsiaceae</taxon>
        <taxon>Hydrogenovibrio</taxon>
    </lineage>
</organism>
<sequence>MSINATLLIQIIAFVLLIWFVNKVLWGPLSKLMEDRQKKIADGLSAAEKGKHELELAEQRAKEVLKEAKAQAQNVLSQAEKRGSEIVEDAKIKATEEADRIKAAAQAELEQEVSRAREDLRKEVSTLVVSGAEKILNKEVDAAAHNDMLETLVKSI</sequence>
<protein>
    <recommendedName>
        <fullName evidence="1">ATP synthase subunit b</fullName>
    </recommendedName>
    <alternativeName>
        <fullName evidence="1">ATP synthase F(0) sector subunit b</fullName>
    </alternativeName>
    <alternativeName>
        <fullName evidence="1">ATPase subunit I</fullName>
    </alternativeName>
    <alternativeName>
        <fullName evidence="1">F-type ATPase subunit b</fullName>
        <shortName evidence="1">F-ATPase subunit b</shortName>
    </alternativeName>
</protein>
<comment type="function">
    <text evidence="1">F(1)F(0) ATP synthase produces ATP from ADP in the presence of a proton or sodium gradient. F-type ATPases consist of two structural domains, F(1) containing the extramembraneous catalytic core and F(0) containing the membrane proton channel, linked together by a central stalk and a peripheral stalk. During catalysis, ATP synthesis in the catalytic domain of F(1) is coupled via a rotary mechanism of the central stalk subunits to proton translocation.</text>
</comment>
<comment type="function">
    <text evidence="1">Component of the F(0) channel, it forms part of the peripheral stalk, linking F(1) to F(0).</text>
</comment>
<comment type="subunit">
    <text evidence="1">F-type ATPases have 2 components, F(1) - the catalytic core - and F(0) - the membrane proton channel. F(1) has five subunits: alpha(3), beta(3), gamma(1), delta(1), epsilon(1). F(0) has three main subunits: a(1), b(2) and c(10-14). The alpha and beta chains form an alternating ring which encloses part of the gamma chain. F(1) is attached to F(0) by a central stalk formed by the gamma and epsilon chains, while a peripheral stalk is formed by the delta and b chains.</text>
</comment>
<comment type="subcellular location">
    <subcellularLocation>
        <location evidence="1">Cell inner membrane</location>
        <topology evidence="1">Single-pass membrane protein</topology>
    </subcellularLocation>
</comment>
<comment type="similarity">
    <text evidence="1">Belongs to the ATPase B chain family.</text>
</comment>